<accession>P63336</accession>
<accession>A1ISJ0</accession>
<accession>Q9JR64</accession>
<reference key="1">
    <citation type="journal article" date="2000" name="Nature">
        <title>Complete DNA sequence of a serogroup A strain of Neisseria meningitidis Z2491.</title>
        <authorList>
            <person name="Parkhill J."/>
            <person name="Achtman M."/>
            <person name="James K.D."/>
            <person name="Bentley S.D."/>
            <person name="Churcher C.M."/>
            <person name="Klee S.R."/>
            <person name="Morelli G."/>
            <person name="Basham D."/>
            <person name="Brown D."/>
            <person name="Chillingworth T."/>
            <person name="Davies R.M."/>
            <person name="Davis P."/>
            <person name="Devlin K."/>
            <person name="Feltwell T."/>
            <person name="Hamlin N."/>
            <person name="Holroyd S."/>
            <person name="Jagels K."/>
            <person name="Leather S."/>
            <person name="Moule S."/>
            <person name="Mungall K.L."/>
            <person name="Quail M.A."/>
            <person name="Rajandream M.A."/>
            <person name="Rutherford K.M."/>
            <person name="Simmonds M."/>
            <person name="Skelton J."/>
            <person name="Whitehead S."/>
            <person name="Spratt B.G."/>
            <person name="Barrell B.G."/>
        </authorList>
    </citation>
    <scope>NUCLEOTIDE SEQUENCE [LARGE SCALE GENOMIC DNA]</scope>
    <source>
        <strain>DSM 15465 / Z2491</strain>
    </source>
</reference>
<feature type="chain" id="PRO_0000090097" description="6-phosphogluconolactonase">
    <location>
        <begin position="1"/>
        <end position="231"/>
    </location>
</feature>
<proteinExistence type="inferred from homology"/>
<keyword id="KW-0378">Hydrolase</keyword>
<protein>
    <recommendedName>
        <fullName>6-phosphogluconolactonase</fullName>
        <shortName>6PGL</shortName>
        <ecNumber>3.1.1.31</ecNumber>
    </recommendedName>
</protein>
<gene>
    <name type="primary">pgl</name>
    <name type="ordered locus">NMA1608</name>
</gene>
<evidence type="ECO:0000305" key="1"/>
<dbReference type="EC" id="3.1.1.31"/>
<dbReference type="EMBL" id="AL157959">
    <property type="protein sequence ID" value="CAM08748.1"/>
    <property type="molecule type" value="Genomic_DNA"/>
</dbReference>
<dbReference type="RefSeq" id="WP_002213145.1">
    <property type="nucleotide sequence ID" value="NC_003116.1"/>
</dbReference>
<dbReference type="SMR" id="P63336"/>
<dbReference type="EnsemblBacteria" id="CAM08748">
    <property type="protein sequence ID" value="CAM08748"/>
    <property type="gene ID" value="NMA1608"/>
</dbReference>
<dbReference type="GeneID" id="93387970"/>
<dbReference type="KEGG" id="nma:NMA1608"/>
<dbReference type="HOGENOM" id="CLU_053947_2_1_4"/>
<dbReference type="UniPathway" id="UPA00115">
    <property type="reaction ID" value="UER00409"/>
</dbReference>
<dbReference type="Proteomes" id="UP000000626">
    <property type="component" value="Chromosome"/>
</dbReference>
<dbReference type="GO" id="GO:0017057">
    <property type="term" value="F:6-phosphogluconolactonase activity"/>
    <property type="evidence" value="ECO:0007669"/>
    <property type="project" value="UniProtKB-EC"/>
</dbReference>
<dbReference type="GO" id="GO:0005975">
    <property type="term" value="P:carbohydrate metabolic process"/>
    <property type="evidence" value="ECO:0007669"/>
    <property type="project" value="InterPro"/>
</dbReference>
<dbReference type="GO" id="GO:0006098">
    <property type="term" value="P:pentose-phosphate shunt"/>
    <property type="evidence" value="ECO:0007669"/>
    <property type="project" value="UniProtKB-UniPathway"/>
</dbReference>
<dbReference type="CDD" id="cd01400">
    <property type="entry name" value="6PGL"/>
    <property type="match status" value="1"/>
</dbReference>
<dbReference type="FunFam" id="3.40.50.1360:FF:000021">
    <property type="entry name" value="6-phosphogluconolactonase"/>
    <property type="match status" value="1"/>
</dbReference>
<dbReference type="Gene3D" id="3.40.50.1360">
    <property type="match status" value="1"/>
</dbReference>
<dbReference type="InterPro" id="IPR005900">
    <property type="entry name" value="6-phosphogluconolactonase_DevB"/>
</dbReference>
<dbReference type="InterPro" id="IPR006148">
    <property type="entry name" value="Glc/Gal-6P_isomerase"/>
</dbReference>
<dbReference type="InterPro" id="IPR037171">
    <property type="entry name" value="NagB/RpiA_transferase-like"/>
</dbReference>
<dbReference type="InterPro" id="IPR039104">
    <property type="entry name" value="PGLS"/>
</dbReference>
<dbReference type="NCBIfam" id="TIGR01198">
    <property type="entry name" value="pgl"/>
    <property type="match status" value="1"/>
</dbReference>
<dbReference type="PANTHER" id="PTHR11054">
    <property type="entry name" value="6-PHOSPHOGLUCONOLACTONASE"/>
    <property type="match status" value="1"/>
</dbReference>
<dbReference type="PANTHER" id="PTHR11054:SF0">
    <property type="entry name" value="6-PHOSPHOGLUCONOLACTONASE"/>
    <property type="match status" value="1"/>
</dbReference>
<dbReference type="Pfam" id="PF01182">
    <property type="entry name" value="Glucosamine_iso"/>
    <property type="match status" value="1"/>
</dbReference>
<dbReference type="SUPFAM" id="SSF100950">
    <property type="entry name" value="NagB/RpiA/CoA transferase-like"/>
    <property type="match status" value="1"/>
</dbReference>
<sequence length="231" mass="24980">MFVWHEYENAAEAAQSLADAVADALQGALDEKGGAVLAVSGGRSPIAFFNALSQKDLDWKNVGITLADERIVPTVHADSNTGLVREYLLKNKAEAAMWIPMVEDGKTETELHPDAVVDYALKHYKQPDVLVLGMGNDGHTASIFPKAPQFQTAIDGSAGVALVHTTPVTAPHERVSMTLDAIAHTGHVFLAIRGEEKKAVFDQAAQGENREYPINLVLNHQGVNCHVFYAE</sequence>
<organism>
    <name type="scientific">Neisseria meningitidis serogroup A / serotype 4A (strain DSM 15465 / Z2491)</name>
    <dbReference type="NCBI Taxonomy" id="122587"/>
    <lineage>
        <taxon>Bacteria</taxon>
        <taxon>Pseudomonadati</taxon>
        <taxon>Pseudomonadota</taxon>
        <taxon>Betaproteobacteria</taxon>
        <taxon>Neisseriales</taxon>
        <taxon>Neisseriaceae</taxon>
        <taxon>Neisseria</taxon>
    </lineage>
</organism>
<comment type="function">
    <text>Hydrolysis of 6-phosphogluconolactone to 6-phosphogluconate.</text>
</comment>
<comment type="catalytic activity">
    <reaction>
        <text>6-phospho-D-glucono-1,5-lactone + H2O = 6-phospho-D-gluconate + H(+)</text>
        <dbReference type="Rhea" id="RHEA:12556"/>
        <dbReference type="ChEBI" id="CHEBI:15377"/>
        <dbReference type="ChEBI" id="CHEBI:15378"/>
        <dbReference type="ChEBI" id="CHEBI:57955"/>
        <dbReference type="ChEBI" id="CHEBI:58759"/>
        <dbReference type="EC" id="3.1.1.31"/>
    </reaction>
</comment>
<comment type="pathway">
    <text>Carbohydrate degradation; pentose phosphate pathway; D-ribulose 5-phosphate from D-glucose 6-phosphate (oxidative stage): step 2/3.</text>
</comment>
<comment type="similarity">
    <text evidence="1">Belongs to the glucosamine/galactosamine-6-phosphate isomerase family. 6-phosphogluconolactonase subfamily.</text>
</comment>
<name>6PGL_NEIMA</name>